<organism>
    <name type="scientific">Acanthamoeba polyphaga mimivirus</name>
    <name type="common">APMV</name>
    <dbReference type="NCBI Taxonomy" id="212035"/>
    <lineage>
        <taxon>Viruses</taxon>
        <taxon>Varidnaviria</taxon>
        <taxon>Bamfordvirae</taxon>
        <taxon>Nucleocytoviricota</taxon>
        <taxon>Megaviricetes</taxon>
        <taxon>Imitervirales</taxon>
        <taxon>Mimiviridae</taxon>
        <taxon>Megamimivirinae</taxon>
        <taxon>Mimivirus</taxon>
        <taxon>Mimivirus bradfordmassiliense</taxon>
    </lineage>
</organism>
<protein>
    <recommendedName>
        <fullName>DNA-directed RNA polymerase subunit 2</fullName>
        <ecNumber>2.7.7.6</ecNumber>
    </recommendedName>
</protein>
<accession>Q7T6X7</accession>
<dbReference type="EC" id="2.7.7.6"/>
<dbReference type="EMBL" id="AY653733">
    <property type="protein sequence ID" value="AAQ09583.2"/>
    <property type="molecule type" value="Genomic_DNA"/>
</dbReference>
<dbReference type="SMR" id="Q7T6X7"/>
<dbReference type="Proteomes" id="UP000001134">
    <property type="component" value="Genome"/>
</dbReference>
<dbReference type="GO" id="GO:0000428">
    <property type="term" value="C:DNA-directed RNA polymerase complex"/>
    <property type="evidence" value="ECO:0007669"/>
    <property type="project" value="UniProtKB-KW"/>
</dbReference>
<dbReference type="GO" id="GO:0044423">
    <property type="term" value="C:virion component"/>
    <property type="evidence" value="ECO:0007669"/>
    <property type="project" value="UniProtKB-KW"/>
</dbReference>
<dbReference type="GO" id="GO:0003677">
    <property type="term" value="F:DNA binding"/>
    <property type="evidence" value="ECO:0007669"/>
    <property type="project" value="InterPro"/>
</dbReference>
<dbReference type="GO" id="GO:0003899">
    <property type="term" value="F:DNA-directed RNA polymerase activity"/>
    <property type="evidence" value="ECO:0007669"/>
    <property type="project" value="UniProtKB-EC"/>
</dbReference>
<dbReference type="GO" id="GO:0032549">
    <property type="term" value="F:ribonucleoside binding"/>
    <property type="evidence" value="ECO:0007669"/>
    <property type="project" value="InterPro"/>
</dbReference>
<dbReference type="GO" id="GO:0008270">
    <property type="term" value="F:zinc ion binding"/>
    <property type="evidence" value="ECO:0007669"/>
    <property type="project" value="UniProtKB-KW"/>
</dbReference>
<dbReference type="GO" id="GO:0006351">
    <property type="term" value="P:DNA-templated transcription"/>
    <property type="evidence" value="ECO:0007669"/>
    <property type="project" value="InterPro"/>
</dbReference>
<dbReference type="CDD" id="cd00653">
    <property type="entry name" value="RNA_pol_B_RPB2"/>
    <property type="match status" value="1"/>
</dbReference>
<dbReference type="Gene3D" id="2.40.50.150">
    <property type="match status" value="1"/>
</dbReference>
<dbReference type="Gene3D" id="3.90.1100.10">
    <property type="match status" value="2"/>
</dbReference>
<dbReference type="Gene3D" id="2.40.270.10">
    <property type="entry name" value="DNA-directed RNA polymerase, subunit 2, domain 6"/>
    <property type="match status" value="1"/>
</dbReference>
<dbReference type="Gene3D" id="3.90.1800.10">
    <property type="entry name" value="RNA polymerase alpha subunit dimerisation domain"/>
    <property type="match status" value="1"/>
</dbReference>
<dbReference type="Gene3D" id="3.90.1110.10">
    <property type="entry name" value="RNA polymerase Rpb2, domain 2"/>
    <property type="match status" value="1"/>
</dbReference>
<dbReference type="InterPro" id="IPR015712">
    <property type="entry name" value="DNA-dir_RNA_pol_su2"/>
</dbReference>
<dbReference type="InterPro" id="IPR007120">
    <property type="entry name" value="DNA-dir_RNAP_su2_dom"/>
</dbReference>
<dbReference type="InterPro" id="IPR037033">
    <property type="entry name" value="DNA-dir_RNAP_su2_hyb_sf"/>
</dbReference>
<dbReference type="InterPro" id="IPR007121">
    <property type="entry name" value="RNA_pol_bsu_CS"/>
</dbReference>
<dbReference type="InterPro" id="IPR007644">
    <property type="entry name" value="RNA_pol_bsu_protrusion"/>
</dbReference>
<dbReference type="InterPro" id="IPR007642">
    <property type="entry name" value="RNA_pol_Rpb2_2"/>
</dbReference>
<dbReference type="InterPro" id="IPR037034">
    <property type="entry name" value="RNA_pol_Rpb2_2_sf"/>
</dbReference>
<dbReference type="InterPro" id="IPR007645">
    <property type="entry name" value="RNA_pol_Rpb2_3"/>
</dbReference>
<dbReference type="InterPro" id="IPR007646">
    <property type="entry name" value="RNA_pol_Rpb2_4"/>
</dbReference>
<dbReference type="InterPro" id="IPR007647">
    <property type="entry name" value="RNA_pol_Rpb2_5"/>
</dbReference>
<dbReference type="InterPro" id="IPR007641">
    <property type="entry name" value="RNA_pol_Rpb2_7"/>
</dbReference>
<dbReference type="InterPro" id="IPR014724">
    <property type="entry name" value="RNA_pol_RPB2_OB-fold"/>
</dbReference>
<dbReference type="PANTHER" id="PTHR20856">
    <property type="entry name" value="DNA-DIRECTED RNA POLYMERASE I SUBUNIT 2"/>
    <property type="match status" value="1"/>
</dbReference>
<dbReference type="Pfam" id="PF04563">
    <property type="entry name" value="RNA_pol_Rpb2_1"/>
    <property type="match status" value="1"/>
</dbReference>
<dbReference type="Pfam" id="PF04561">
    <property type="entry name" value="RNA_pol_Rpb2_2"/>
    <property type="match status" value="1"/>
</dbReference>
<dbReference type="Pfam" id="PF04565">
    <property type="entry name" value="RNA_pol_Rpb2_3"/>
    <property type="match status" value="1"/>
</dbReference>
<dbReference type="Pfam" id="PF04566">
    <property type="entry name" value="RNA_pol_Rpb2_4"/>
    <property type="match status" value="1"/>
</dbReference>
<dbReference type="Pfam" id="PF04567">
    <property type="entry name" value="RNA_pol_Rpb2_5"/>
    <property type="match status" value="1"/>
</dbReference>
<dbReference type="Pfam" id="PF00562">
    <property type="entry name" value="RNA_pol_Rpb2_6"/>
    <property type="match status" value="1"/>
</dbReference>
<dbReference type="Pfam" id="PF04560">
    <property type="entry name" value="RNA_pol_Rpb2_7"/>
    <property type="match status" value="1"/>
</dbReference>
<dbReference type="SUPFAM" id="SSF64484">
    <property type="entry name" value="beta and beta-prime subunits of DNA dependent RNA-polymerase"/>
    <property type="match status" value="1"/>
</dbReference>
<dbReference type="PROSITE" id="PS01166">
    <property type="entry name" value="RNA_POL_BETA"/>
    <property type="match status" value="1"/>
</dbReference>
<keyword id="KW-0240">DNA-directed RNA polymerase</keyword>
<keyword id="KW-0479">Metal-binding</keyword>
<keyword id="KW-0548">Nucleotidyltransferase</keyword>
<keyword id="KW-1185">Reference proteome</keyword>
<keyword id="KW-0804">Transcription</keyword>
<keyword id="KW-0808">Transferase</keyword>
<keyword id="KW-0946">Virion</keyword>
<keyword id="KW-0862">Zinc</keyword>
<keyword id="KW-0863">Zinc-finger</keyword>
<organismHost>
    <name type="scientific">Acanthamoeba polyphaga</name>
    <name type="common">Amoeba</name>
    <dbReference type="NCBI Taxonomy" id="5757"/>
</organismHost>
<proteinExistence type="evidence at protein level"/>
<sequence>MSKKSVEIEDVNNTYDQEAHFALLDLFFEKDKQVLVKHHIDSFNQFIEEIIPNILQGGDNVISEKATENKIIRYRLTFNDLGIKPPTLENEENLLYPLDAIRKQISYSAKYTATVTQWQDIVDIDTKKTETRIIGSPEKDVPIAKIPIMVLSKYCNLTLRPDIAGKHCKYDAGGYFIVNGSEKVVLSVESMIPRKPVVFTQRDQNSLLYYVRVQSIPASQFVGNPQLFTVKMKRDNSIILSIPHFKEVSIFTFIRALGIETDEDIVDSILDVKKEKDLLNLLSICMNSSNTPSVTKEEALEIMANQIKSTKTFTDTNPEVKAEQRRRYLDKIMTQFVLPHITSGTGDPEIDKIYKAHYICYMIHKLLKCYLRGAREVEEYRGCDDRDSMVNKRIDLTGRLLGGLFKQFYDKMLNDCNKIFRTKNIDDKKPPNIIPHIKPNSIEQGLRQALSTGNFGSQSRKGLSQMLNRMNHLHSLSYMRRVITPTVDASTMKMTSPRHLHNTQYGSMCPLESPEGKPKTGLVKNMAMMEGITINMNSQIPIIESYLIGKITTLESANKKRLHQYVKVFLNGNWLGVTRNIIKIHNDLRAMRFRGELSRMVGLVLNYKTAEFHIYTDGGRLIRPYLTVTDNKLNFKPEMLDEVNSWEEFLAKFPEVIEYVDKEEEQNIMLAVFPQYIQDANRIMSKKPINSRDQLNKINRTNRYDDNVYVRYTHCEIHPCMILGLISSNIPFPDHNQSPRGIFQYNQARQAMGLYISDYRERTDISYILYHPQIPLVTSRASKYTGTHIFPAGENSIVAIASYTGLMNQEDSLVINDSAIQKGYMRAQALKKYMEIIKKNPASSQTSIFMKPDRNKVDNLRDANYDKLSEEGYAKVETVIRDGDVVIGVVNPKPTAREDEKQYKDASSIYKSLIPGAVDKVITEVNNDGYPIIKMRIRSERIPNVGDKFSSRAGQKGTIGYKAHRADMLFSKSGLIPDIIINPNCMPKRMTIGQLIECLLGKLCAVKGVYGDATPFTSVDLNAINDELVAAGYEEWGNETMYNGMNGKKLPVKIFIGPTYYQRLKQMVGDKAHSRARGPTQLLTRQAPEGRSRDGGLRIGFEMERDALCAHGVAQFLKEKTVDNSDIYTCHVCDSCGQFAHKVPEKKYYTCTGCRNTTSISKIVIPYAFKLLLQELASINILGKIRTSKTIATPRG</sequence>
<comment type="function">
    <text evidence="1">DNA-dependent RNA polymerase catalyzes the transcription of DNA into RNA using the four ribonucleoside triphosphates as substrates.</text>
</comment>
<comment type="catalytic activity">
    <reaction>
        <text>RNA(n) + a ribonucleoside 5'-triphosphate = RNA(n+1) + diphosphate</text>
        <dbReference type="Rhea" id="RHEA:21248"/>
        <dbReference type="Rhea" id="RHEA-COMP:14527"/>
        <dbReference type="Rhea" id="RHEA-COMP:17342"/>
        <dbReference type="ChEBI" id="CHEBI:33019"/>
        <dbReference type="ChEBI" id="CHEBI:61557"/>
        <dbReference type="ChEBI" id="CHEBI:140395"/>
        <dbReference type="EC" id="2.7.7.6"/>
    </reaction>
</comment>
<comment type="subcellular location">
    <subcellularLocation>
        <location evidence="3">Virion</location>
    </subcellularLocation>
</comment>
<comment type="similarity">
    <text evidence="4">Belongs to the RNA polymerase beta chain family.</text>
</comment>
<feature type="chain" id="PRO_0000048057" description="DNA-directed RNA polymerase subunit 2">
    <location>
        <begin position="1"/>
        <end position="1196"/>
    </location>
</feature>
<feature type="zinc finger region" description="C4-type">
    <location>
        <begin position="1133"/>
        <end position="1154"/>
    </location>
</feature>
<feature type="region of interest" description="Disordered" evidence="2">
    <location>
        <begin position="1074"/>
        <end position="1095"/>
    </location>
</feature>
<gene>
    <name type="primary">RPO2</name>
    <name type="ordered locus">MIMI_L244</name>
</gene>
<reference key="1">
    <citation type="journal article" date="2004" name="Science">
        <title>The 1.2-megabase genome sequence of Mimivirus.</title>
        <authorList>
            <person name="Raoult D."/>
            <person name="Audic S."/>
            <person name="Robert C."/>
            <person name="Abergel C."/>
            <person name="Renesto P."/>
            <person name="Ogata H."/>
            <person name="La Scola B."/>
            <person name="Susan M."/>
            <person name="Claverie J.-M."/>
        </authorList>
    </citation>
    <scope>NUCLEOTIDE SEQUENCE [LARGE SCALE GENOMIC DNA]</scope>
    <source>
        <strain>Rowbotham-Bradford</strain>
    </source>
</reference>
<reference key="2">
    <citation type="journal article" date="2006" name="J. Virol.">
        <title>Mimivirus giant particles incorporate a large fraction of anonymous and unique gene products.</title>
        <authorList>
            <person name="Renesto P."/>
            <person name="Abergel C."/>
            <person name="Decloquement P."/>
            <person name="Moinier D."/>
            <person name="Azza S."/>
            <person name="Ogata H."/>
            <person name="Fourquet P."/>
            <person name="Gorvel J.-P."/>
            <person name="Claverie J.-M."/>
            <person name="Raoult D."/>
        </authorList>
    </citation>
    <scope>IDENTIFICATION BY MASS SPECTROMETRY [LARGE SCALE ANALYSIS]</scope>
    <scope>SUBCELLULAR LOCATION</scope>
</reference>
<evidence type="ECO:0000250" key="1"/>
<evidence type="ECO:0000256" key="2">
    <source>
        <dbReference type="SAM" id="MobiDB-lite"/>
    </source>
</evidence>
<evidence type="ECO:0000269" key="3">
    <source>
    </source>
</evidence>
<evidence type="ECO:0000305" key="4"/>
<name>RPO2_MIMIV</name>